<dbReference type="EC" id="4.1.99.17" evidence="1"/>
<dbReference type="EMBL" id="CP001111">
    <property type="protein sequence ID" value="ACF53024.1"/>
    <property type="molecule type" value="Genomic_DNA"/>
</dbReference>
<dbReference type="RefSeq" id="WP_012512035.1">
    <property type="nucleotide sequence ID" value="NC_011071.1"/>
</dbReference>
<dbReference type="SMR" id="B4SI60"/>
<dbReference type="STRING" id="391008.Smal_3325"/>
<dbReference type="KEGG" id="smt:Smal_3325"/>
<dbReference type="eggNOG" id="COG0422">
    <property type="taxonomic scope" value="Bacteria"/>
</dbReference>
<dbReference type="HOGENOM" id="CLU_013181_2_1_6"/>
<dbReference type="OrthoDB" id="9805897at2"/>
<dbReference type="UniPathway" id="UPA00060"/>
<dbReference type="Proteomes" id="UP000001867">
    <property type="component" value="Chromosome"/>
</dbReference>
<dbReference type="GO" id="GO:0005829">
    <property type="term" value="C:cytosol"/>
    <property type="evidence" value="ECO:0007669"/>
    <property type="project" value="TreeGrafter"/>
</dbReference>
<dbReference type="GO" id="GO:0051539">
    <property type="term" value="F:4 iron, 4 sulfur cluster binding"/>
    <property type="evidence" value="ECO:0007669"/>
    <property type="project" value="UniProtKB-KW"/>
</dbReference>
<dbReference type="GO" id="GO:0016830">
    <property type="term" value="F:carbon-carbon lyase activity"/>
    <property type="evidence" value="ECO:0007669"/>
    <property type="project" value="InterPro"/>
</dbReference>
<dbReference type="GO" id="GO:0008270">
    <property type="term" value="F:zinc ion binding"/>
    <property type="evidence" value="ECO:0007669"/>
    <property type="project" value="UniProtKB-UniRule"/>
</dbReference>
<dbReference type="GO" id="GO:0009228">
    <property type="term" value="P:thiamine biosynthetic process"/>
    <property type="evidence" value="ECO:0007669"/>
    <property type="project" value="UniProtKB-KW"/>
</dbReference>
<dbReference type="GO" id="GO:0009229">
    <property type="term" value="P:thiamine diphosphate biosynthetic process"/>
    <property type="evidence" value="ECO:0007669"/>
    <property type="project" value="UniProtKB-UniRule"/>
</dbReference>
<dbReference type="FunFam" id="3.20.20.540:FF:000001">
    <property type="entry name" value="Phosphomethylpyrimidine synthase"/>
    <property type="match status" value="1"/>
</dbReference>
<dbReference type="Gene3D" id="6.10.250.620">
    <property type="match status" value="1"/>
</dbReference>
<dbReference type="Gene3D" id="3.20.20.540">
    <property type="entry name" value="Radical SAM ThiC family, central domain"/>
    <property type="match status" value="1"/>
</dbReference>
<dbReference type="HAMAP" id="MF_00089">
    <property type="entry name" value="ThiC"/>
    <property type="match status" value="1"/>
</dbReference>
<dbReference type="InterPro" id="IPR037509">
    <property type="entry name" value="ThiC"/>
</dbReference>
<dbReference type="InterPro" id="IPR025747">
    <property type="entry name" value="ThiC-associated_dom"/>
</dbReference>
<dbReference type="InterPro" id="IPR038521">
    <property type="entry name" value="ThiC/Bza_core_dom"/>
</dbReference>
<dbReference type="InterPro" id="IPR002817">
    <property type="entry name" value="ThiC/BzaA/B"/>
</dbReference>
<dbReference type="NCBIfam" id="NF006763">
    <property type="entry name" value="PRK09284.1"/>
    <property type="match status" value="1"/>
</dbReference>
<dbReference type="NCBIfam" id="NF009895">
    <property type="entry name" value="PRK13352.1"/>
    <property type="match status" value="1"/>
</dbReference>
<dbReference type="NCBIfam" id="TIGR00190">
    <property type="entry name" value="thiC"/>
    <property type="match status" value="1"/>
</dbReference>
<dbReference type="PANTHER" id="PTHR30557:SF1">
    <property type="entry name" value="PHOSPHOMETHYLPYRIMIDINE SYNTHASE, CHLOROPLASTIC"/>
    <property type="match status" value="1"/>
</dbReference>
<dbReference type="PANTHER" id="PTHR30557">
    <property type="entry name" value="THIAMINE BIOSYNTHESIS PROTEIN THIC"/>
    <property type="match status" value="1"/>
</dbReference>
<dbReference type="Pfam" id="PF13667">
    <property type="entry name" value="ThiC-associated"/>
    <property type="match status" value="1"/>
</dbReference>
<dbReference type="Pfam" id="PF01964">
    <property type="entry name" value="ThiC_Rad_SAM"/>
    <property type="match status" value="1"/>
</dbReference>
<dbReference type="SFLD" id="SFLDF00407">
    <property type="entry name" value="phosphomethylpyrimidine_syntha"/>
    <property type="match status" value="1"/>
</dbReference>
<dbReference type="SFLD" id="SFLDG01114">
    <property type="entry name" value="phosphomethylpyrimidine_syntha"/>
    <property type="match status" value="1"/>
</dbReference>
<dbReference type="SFLD" id="SFLDS00113">
    <property type="entry name" value="Radical_SAM_Phosphomethylpyrim"/>
    <property type="match status" value="1"/>
</dbReference>
<reference key="1">
    <citation type="submission" date="2008-06" db="EMBL/GenBank/DDBJ databases">
        <title>Complete sequence of Stenotrophomonas maltophilia R551-3.</title>
        <authorList>
            <consortium name="US DOE Joint Genome Institute"/>
            <person name="Lucas S."/>
            <person name="Copeland A."/>
            <person name="Lapidus A."/>
            <person name="Glavina del Rio T."/>
            <person name="Dalin E."/>
            <person name="Tice H."/>
            <person name="Pitluck S."/>
            <person name="Chain P."/>
            <person name="Malfatti S."/>
            <person name="Shin M."/>
            <person name="Vergez L."/>
            <person name="Lang D."/>
            <person name="Schmutz J."/>
            <person name="Larimer F."/>
            <person name="Land M."/>
            <person name="Hauser L."/>
            <person name="Kyrpides N."/>
            <person name="Mikhailova N."/>
            <person name="Taghavi S."/>
            <person name="Monchy S."/>
            <person name="Newman L."/>
            <person name="Vangronsveld J."/>
            <person name="van der Lelie D."/>
            <person name="Richardson P."/>
        </authorList>
    </citation>
    <scope>NUCLEOTIDE SEQUENCE [LARGE SCALE GENOMIC DNA]</scope>
    <source>
        <strain>R551-3</strain>
    </source>
</reference>
<evidence type="ECO:0000255" key="1">
    <source>
        <dbReference type="HAMAP-Rule" id="MF_00089"/>
    </source>
</evidence>
<evidence type="ECO:0000256" key="2">
    <source>
        <dbReference type="SAM" id="MobiDB-lite"/>
    </source>
</evidence>
<name>THIC_STRM5</name>
<sequence length="614" mass="68337">MNAQLSALQQQAQQLSESVTRPIPGSRKIHVPGSRPDLQVPMREIALTRTPTLFGGEENAPVTVYDTSGPYTDPEVRIDLSAGLPALRRGWVEERGDTERLEGLSSSFGRDREHDPKLDAVRFPARSLPRRARAGANVTQMHYARRGIITPEMEFVAIRENQRLEAIRDAGLLQQHPGEAFGASIQKIITPEFVRDEIARGRAVLPNNINHPESEPMIIGRNFLTKINANIGNSAVSSGIAEEVEKLVWAIRWGGDTVMDLSTGKHIHETREWIIRNSPVAIGTVPIYQALEKVDGRAEALTWEIFRDTLIEQAEQGVDYFTIHAGVLLRYVPLTAKRVTGIVSRGGSIMAKWCLAHHKENFLYTHFEDICEIMKAYDVTFSLGDGLRPGCIADANDAAQFGELETLGELTKIAWKHDVQTMIEGPGHVPMQLIKENMDKQLRECGEAPFYTLGPLTTDIAPGYDHITSAIGAAMIGWFGTAMLCYVTPKEHLGLPNRQDVRDGIMAYRIAAHAADLAKGHPGAQVRDNALSKARFEFRWEDQFHLGLDPEKAKEFHDETLPKDAHKLAHFCSMCGPHFCSMKITQDVREYAESGMKERSEAFRAAGAEVYHQG</sequence>
<accession>B4SI60</accession>
<feature type="chain" id="PRO_1000093238" description="Phosphomethylpyrimidine synthase">
    <location>
        <begin position="1"/>
        <end position="614"/>
    </location>
</feature>
<feature type="region of interest" description="Disordered" evidence="2">
    <location>
        <begin position="1"/>
        <end position="36"/>
    </location>
</feature>
<feature type="compositionally biased region" description="Low complexity" evidence="2">
    <location>
        <begin position="1"/>
        <end position="16"/>
    </location>
</feature>
<feature type="binding site" evidence="1">
    <location>
        <position position="230"/>
    </location>
    <ligand>
        <name>substrate</name>
    </ligand>
</feature>
<feature type="binding site" evidence="1">
    <location>
        <position position="259"/>
    </location>
    <ligand>
        <name>substrate</name>
    </ligand>
</feature>
<feature type="binding site" evidence="1">
    <location>
        <position position="288"/>
    </location>
    <ligand>
        <name>substrate</name>
    </ligand>
</feature>
<feature type="binding site" evidence="1">
    <location>
        <position position="324"/>
    </location>
    <ligand>
        <name>substrate</name>
    </ligand>
</feature>
<feature type="binding site" evidence="1">
    <location>
        <begin position="344"/>
        <end position="346"/>
    </location>
    <ligand>
        <name>substrate</name>
    </ligand>
</feature>
<feature type="binding site" evidence="1">
    <location>
        <begin position="385"/>
        <end position="388"/>
    </location>
    <ligand>
        <name>substrate</name>
    </ligand>
</feature>
<feature type="binding site" evidence="1">
    <location>
        <position position="424"/>
    </location>
    <ligand>
        <name>substrate</name>
    </ligand>
</feature>
<feature type="binding site" evidence="1">
    <location>
        <position position="428"/>
    </location>
    <ligand>
        <name>Zn(2+)</name>
        <dbReference type="ChEBI" id="CHEBI:29105"/>
    </ligand>
</feature>
<feature type="binding site" evidence="1">
    <location>
        <position position="451"/>
    </location>
    <ligand>
        <name>substrate</name>
    </ligand>
</feature>
<feature type="binding site" evidence="1">
    <location>
        <position position="492"/>
    </location>
    <ligand>
        <name>Zn(2+)</name>
        <dbReference type="ChEBI" id="CHEBI:29105"/>
    </ligand>
</feature>
<feature type="binding site" evidence="1">
    <location>
        <position position="572"/>
    </location>
    <ligand>
        <name>[4Fe-4S] cluster</name>
        <dbReference type="ChEBI" id="CHEBI:49883"/>
        <note>4Fe-4S-S-AdoMet</note>
    </ligand>
</feature>
<feature type="binding site" evidence="1">
    <location>
        <position position="575"/>
    </location>
    <ligand>
        <name>[4Fe-4S] cluster</name>
        <dbReference type="ChEBI" id="CHEBI:49883"/>
        <note>4Fe-4S-S-AdoMet</note>
    </ligand>
</feature>
<feature type="binding site" evidence="1">
    <location>
        <position position="580"/>
    </location>
    <ligand>
        <name>[4Fe-4S] cluster</name>
        <dbReference type="ChEBI" id="CHEBI:49883"/>
        <note>4Fe-4S-S-AdoMet</note>
    </ligand>
</feature>
<keyword id="KW-0004">4Fe-4S</keyword>
<keyword id="KW-0408">Iron</keyword>
<keyword id="KW-0411">Iron-sulfur</keyword>
<keyword id="KW-0456">Lyase</keyword>
<keyword id="KW-0479">Metal-binding</keyword>
<keyword id="KW-0949">S-adenosyl-L-methionine</keyword>
<keyword id="KW-0784">Thiamine biosynthesis</keyword>
<keyword id="KW-0862">Zinc</keyword>
<gene>
    <name evidence="1" type="primary">thiC</name>
    <name type="ordered locus">Smal_3325</name>
</gene>
<comment type="function">
    <text evidence="1">Catalyzes the synthesis of the hydroxymethylpyrimidine phosphate (HMP-P) moiety of thiamine from aminoimidazole ribotide (AIR) in a radical S-adenosyl-L-methionine (SAM)-dependent reaction.</text>
</comment>
<comment type="catalytic activity">
    <reaction evidence="1">
        <text>5-amino-1-(5-phospho-beta-D-ribosyl)imidazole + S-adenosyl-L-methionine = 4-amino-2-methyl-5-(phosphooxymethyl)pyrimidine + CO + 5'-deoxyadenosine + formate + L-methionine + 3 H(+)</text>
        <dbReference type="Rhea" id="RHEA:24840"/>
        <dbReference type="ChEBI" id="CHEBI:15378"/>
        <dbReference type="ChEBI" id="CHEBI:15740"/>
        <dbReference type="ChEBI" id="CHEBI:17245"/>
        <dbReference type="ChEBI" id="CHEBI:17319"/>
        <dbReference type="ChEBI" id="CHEBI:57844"/>
        <dbReference type="ChEBI" id="CHEBI:58354"/>
        <dbReference type="ChEBI" id="CHEBI:59789"/>
        <dbReference type="ChEBI" id="CHEBI:137981"/>
        <dbReference type="EC" id="4.1.99.17"/>
    </reaction>
</comment>
<comment type="cofactor">
    <cofactor evidence="1">
        <name>[4Fe-4S] cluster</name>
        <dbReference type="ChEBI" id="CHEBI:49883"/>
    </cofactor>
    <text evidence="1">Binds 1 [4Fe-4S] cluster per subunit. The cluster is coordinated with 3 cysteines and an exchangeable S-adenosyl-L-methionine.</text>
</comment>
<comment type="pathway">
    <text evidence="1">Cofactor biosynthesis; thiamine diphosphate biosynthesis.</text>
</comment>
<comment type="subunit">
    <text evidence="1">Homodimer.</text>
</comment>
<comment type="similarity">
    <text evidence="1">Belongs to the ThiC family.</text>
</comment>
<protein>
    <recommendedName>
        <fullName evidence="1">Phosphomethylpyrimidine synthase</fullName>
        <ecNumber evidence="1">4.1.99.17</ecNumber>
    </recommendedName>
    <alternativeName>
        <fullName evidence="1">Hydroxymethylpyrimidine phosphate synthase</fullName>
        <shortName evidence="1">HMP-P synthase</shortName>
        <shortName evidence="1">HMP-phosphate synthase</shortName>
        <shortName evidence="1">HMPP synthase</shortName>
    </alternativeName>
    <alternativeName>
        <fullName evidence="1">Thiamine biosynthesis protein ThiC</fullName>
    </alternativeName>
</protein>
<proteinExistence type="inferred from homology"/>
<organism>
    <name type="scientific">Stenotrophomonas maltophilia (strain R551-3)</name>
    <dbReference type="NCBI Taxonomy" id="391008"/>
    <lineage>
        <taxon>Bacteria</taxon>
        <taxon>Pseudomonadati</taxon>
        <taxon>Pseudomonadota</taxon>
        <taxon>Gammaproteobacteria</taxon>
        <taxon>Lysobacterales</taxon>
        <taxon>Lysobacteraceae</taxon>
        <taxon>Stenotrophomonas</taxon>
        <taxon>Stenotrophomonas maltophilia group</taxon>
    </lineage>
</organism>